<protein>
    <recommendedName>
        <fullName evidence="2">Translation initiation factor IF-2</fullName>
    </recommendedName>
</protein>
<evidence type="ECO:0000250" key="1"/>
<evidence type="ECO:0000255" key="2">
    <source>
        <dbReference type="HAMAP-Rule" id="MF_00100"/>
    </source>
</evidence>
<evidence type="ECO:0000256" key="3">
    <source>
        <dbReference type="SAM" id="MobiDB-lite"/>
    </source>
</evidence>
<gene>
    <name evidence="2" type="primary">infB</name>
    <name type="ordered locus">GOX1582</name>
</gene>
<proteinExistence type="inferred from homology"/>
<comment type="function">
    <text evidence="2">One of the essential components for the initiation of protein synthesis. Protects formylmethionyl-tRNA from spontaneous hydrolysis and promotes its binding to the 30S ribosomal subunits. Also involved in the hydrolysis of GTP during the formation of the 70S ribosomal complex.</text>
</comment>
<comment type="subcellular location">
    <subcellularLocation>
        <location evidence="2">Cytoplasm</location>
    </subcellularLocation>
</comment>
<comment type="similarity">
    <text evidence="2">Belongs to the TRAFAC class translation factor GTPase superfamily. Classic translation factor GTPase family. IF-2 subfamily.</text>
</comment>
<sequence>MSDGNERNQDGNNTPSQGGEQTRSSRLSLRPAGRQEVGRTVDAGSVRQSFSHGRSKVVQVEVRKPKRNAAGPGAGAAARGGRAGGRALTAAELAARQRALELQRKAAAEEAARREEEKIQIMSAAEAARRAAEEERLISEQKAAEIAALKESEQQAAREQAAAEAAARAAEQAAAEAAAREAEEAARSAPLDPRSHSTGGVQLAAPVQRLRPLAERAIMPPRPVQPSRPAAAAPARNNETLHLRSGAAAGGDDERRPAPRRSGPGAPPAPPRRPSAPSRKGGGSDRRSGRIDVRAAIEGDDDKTRSLASVRRQRDRERRQAELERLRSDQVRVVRDVIVPETITVAELANRMAARQGEVIKALMKMGVMATAAQSIDGDTAELVVEEFGHRIKRVSESDVEIGIEGVEDNADDLKPRAPVVTVMGHVDHGKTSLLDALRTTDVAASEAGGITQHIGAYQITAPSGKKITFIDTPGHEAFTSMRARGASVTDIVVLVVAADDGVMPQTIEAIKHAKAANAPIIVAINKIDKPGANPNRVRQELLNHEIVVEEMGGDTQDVEVSALKRIGLDKLEECILLQSEMLDLKANPDRVAEGVVIESRLDRGRGPVAALLVQKGTLRRGDIVVAGAEWGRVRAVLDDRGRQVKEAGPSMPVEVLGLTGVPGAGEPFVVVENDARAREISEFRQRKIKEKEAASQVAARGTLDQMLARIQAGVQKEVALLIKADVQGSAEAISTTVQKLAHEEVAVRVLNASVGQITESDIQLAKASDAIIVAFNVRATTQARELAQREGVDIRYYSIIYQVADDVEQLVKGKVAPKHREKFLGYAEVRQVFNITKTGKVAGCYVTEGLVKRGCGVRLLRDNVVIHEGELSQLKRFKDDVKEVARGYECGLSFAGYNDLREGDMVECYEMEVIPA</sequence>
<accession>Q5FQM3</accession>
<reference key="1">
    <citation type="journal article" date="2005" name="Nat. Biotechnol.">
        <title>Complete genome sequence of the acetic acid bacterium Gluconobacter oxydans.</title>
        <authorList>
            <person name="Prust C."/>
            <person name="Hoffmeister M."/>
            <person name="Liesegang H."/>
            <person name="Wiezer A."/>
            <person name="Fricke W.F."/>
            <person name="Ehrenreich A."/>
            <person name="Gottschalk G."/>
            <person name="Deppenmeier U."/>
        </authorList>
    </citation>
    <scope>NUCLEOTIDE SEQUENCE [LARGE SCALE GENOMIC DNA]</scope>
    <source>
        <strain>621H</strain>
    </source>
</reference>
<organism>
    <name type="scientific">Gluconobacter oxydans (strain 621H)</name>
    <name type="common">Gluconobacter suboxydans</name>
    <dbReference type="NCBI Taxonomy" id="290633"/>
    <lineage>
        <taxon>Bacteria</taxon>
        <taxon>Pseudomonadati</taxon>
        <taxon>Pseudomonadota</taxon>
        <taxon>Alphaproteobacteria</taxon>
        <taxon>Acetobacterales</taxon>
        <taxon>Acetobacteraceae</taxon>
        <taxon>Gluconobacter</taxon>
    </lineage>
</organism>
<dbReference type="EMBL" id="CP000009">
    <property type="protein sequence ID" value="AAW61323.1"/>
    <property type="molecule type" value="Genomic_DNA"/>
</dbReference>
<dbReference type="RefSeq" id="WP_011253107.1">
    <property type="nucleotide sequence ID" value="NC_006677.1"/>
</dbReference>
<dbReference type="SMR" id="Q5FQM3"/>
<dbReference type="STRING" id="290633.GOX1582"/>
<dbReference type="KEGG" id="gox:GOX1582"/>
<dbReference type="eggNOG" id="COG0532">
    <property type="taxonomic scope" value="Bacteria"/>
</dbReference>
<dbReference type="HOGENOM" id="CLU_006301_10_1_5"/>
<dbReference type="Proteomes" id="UP000006375">
    <property type="component" value="Chromosome"/>
</dbReference>
<dbReference type="GO" id="GO:0005829">
    <property type="term" value="C:cytosol"/>
    <property type="evidence" value="ECO:0007669"/>
    <property type="project" value="TreeGrafter"/>
</dbReference>
<dbReference type="GO" id="GO:0005525">
    <property type="term" value="F:GTP binding"/>
    <property type="evidence" value="ECO:0007669"/>
    <property type="project" value="UniProtKB-KW"/>
</dbReference>
<dbReference type="GO" id="GO:0003924">
    <property type="term" value="F:GTPase activity"/>
    <property type="evidence" value="ECO:0007669"/>
    <property type="project" value="UniProtKB-UniRule"/>
</dbReference>
<dbReference type="GO" id="GO:0097216">
    <property type="term" value="F:guanosine tetraphosphate binding"/>
    <property type="evidence" value="ECO:0007669"/>
    <property type="project" value="UniProtKB-ARBA"/>
</dbReference>
<dbReference type="GO" id="GO:0003743">
    <property type="term" value="F:translation initiation factor activity"/>
    <property type="evidence" value="ECO:0007669"/>
    <property type="project" value="UniProtKB-UniRule"/>
</dbReference>
<dbReference type="CDD" id="cd01887">
    <property type="entry name" value="IF2_eIF5B"/>
    <property type="match status" value="1"/>
</dbReference>
<dbReference type="CDD" id="cd03702">
    <property type="entry name" value="IF2_mtIF2_II"/>
    <property type="match status" value="1"/>
</dbReference>
<dbReference type="CDD" id="cd03692">
    <property type="entry name" value="mtIF2_IVc"/>
    <property type="match status" value="1"/>
</dbReference>
<dbReference type="FunFam" id="2.40.30.10:FF:000007">
    <property type="entry name" value="Translation initiation factor IF-2"/>
    <property type="match status" value="1"/>
</dbReference>
<dbReference type="FunFam" id="2.40.30.10:FF:000008">
    <property type="entry name" value="Translation initiation factor IF-2"/>
    <property type="match status" value="1"/>
</dbReference>
<dbReference type="FunFam" id="3.40.50.10050:FF:000001">
    <property type="entry name" value="Translation initiation factor IF-2"/>
    <property type="match status" value="1"/>
</dbReference>
<dbReference type="FunFam" id="3.40.50.300:FF:000019">
    <property type="entry name" value="Translation initiation factor IF-2"/>
    <property type="match status" value="1"/>
</dbReference>
<dbReference type="Gene3D" id="3.40.50.300">
    <property type="entry name" value="P-loop containing nucleotide triphosphate hydrolases"/>
    <property type="match status" value="1"/>
</dbReference>
<dbReference type="Gene3D" id="2.40.30.10">
    <property type="entry name" value="Translation factors"/>
    <property type="match status" value="2"/>
</dbReference>
<dbReference type="Gene3D" id="3.40.50.10050">
    <property type="entry name" value="Translation initiation factor IF- 2, domain 3"/>
    <property type="match status" value="1"/>
</dbReference>
<dbReference type="HAMAP" id="MF_00100_B">
    <property type="entry name" value="IF_2_B"/>
    <property type="match status" value="1"/>
</dbReference>
<dbReference type="InterPro" id="IPR053905">
    <property type="entry name" value="EF-G-like_DII"/>
</dbReference>
<dbReference type="InterPro" id="IPR004161">
    <property type="entry name" value="EFTu-like_2"/>
</dbReference>
<dbReference type="InterPro" id="IPR013575">
    <property type="entry name" value="IF2_assoc_dom_bac"/>
</dbReference>
<dbReference type="InterPro" id="IPR044145">
    <property type="entry name" value="IF2_II"/>
</dbReference>
<dbReference type="InterPro" id="IPR006847">
    <property type="entry name" value="IF2_N"/>
</dbReference>
<dbReference type="InterPro" id="IPR027417">
    <property type="entry name" value="P-loop_NTPase"/>
</dbReference>
<dbReference type="InterPro" id="IPR005225">
    <property type="entry name" value="Small_GTP-bd"/>
</dbReference>
<dbReference type="InterPro" id="IPR000795">
    <property type="entry name" value="T_Tr_GTP-bd_dom"/>
</dbReference>
<dbReference type="InterPro" id="IPR000178">
    <property type="entry name" value="TF_IF2_bacterial-like"/>
</dbReference>
<dbReference type="InterPro" id="IPR015760">
    <property type="entry name" value="TIF_IF2"/>
</dbReference>
<dbReference type="InterPro" id="IPR023115">
    <property type="entry name" value="TIF_IF2_dom3"/>
</dbReference>
<dbReference type="InterPro" id="IPR036925">
    <property type="entry name" value="TIF_IF2_dom3_sf"/>
</dbReference>
<dbReference type="InterPro" id="IPR009000">
    <property type="entry name" value="Transl_B-barrel_sf"/>
</dbReference>
<dbReference type="NCBIfam" id="TIGR00487">
    <property type="entry name" value="IF-2"/>
    <property type="match status" value="1"/>
</dbReference>
<dbReference type="NCBIfam" id="TIGR00231">
    <property type="entry name" value="small_GTP"/>
    <property type="match status" value="1"/>
</dbReference>
<dbReference type="PANTHER" id="PTHR43381:SF5">
    <property type="entry name" value="TR-TYPE G DOMAIN-CONTAINING PROTEIN"/>
    <property type="match status" value="1"/>
</dbReference>
<dbReference type="PANTHER" id="PTHR43381">
    <property type="entry name" value="TRANSLATION INITIATION FACTOR IF-2-RELATED"/>
    <property type="match status" value="1"/>
</dbReference>
<dbReference type="Pfam" id="PF22042">
    <property type="entry name" value="EF-G_D2"/>
    <property type="match status" value="1"/>
</dbReference>
<dbReference type="Pfam" id="PF00009">
    <property type="entry name" value="GTP_EFTU"/>
    <property type="match status" value="1"/>
</dbReference>
<dbReference type="Pfam" id="PF03144">
    <property type="entry name" value="GTP_EFTU_D2"/>
    <property type="match status" value="1"/>
</dbReference>
<dbReference type="Pfam" id="PF11987">
    <property type="entry name" value="IF-2"/>
    <property type="match status" value="1"/>
</dbReference>
<dbReference type="Pfam" id="PF08364">
    <property type="entry name" value="IF2_assoc"/>
    <property type="match status" value="1"/>
</dbReference>
<dbReference type="Pfam" id="PF04760">
    <property type="entry name" value="IF2_N"/>
    <property type="match status" value="1"/>
</dbReference>
<dbReference type="SUPFAM" id="SSF52156">
    <property type="entry name" value="Initiation factor IF2/eIF5b, domain 3"/>
    <property type="match status" value="1"/>
</dbReference>
<dbReference type="SUPFAM" id="SSF52540">
    <property type="entry name" value="P-loop containing nucleoside triphosphate hydrolases"/>
    <property type="match status" value="1"/>
</dbReference>
<dbReference type="SUPFAM" id="SSF50447">
    <property type="entry name" value="Translation proteins"/>
    <property type="match status" value="2"/>
</dbReference>
<dbReference type="PROSITE" id="PS51722">
    <property type="entry name" value="G_TR_2"/>
    <property type="match status" value="1"/>
</dbReference>
<dbReference type="PROSITE" id="PS01176">
    <property type="entry name" value="IF2"/>
    <property type="match status" value="1"/>
</dbReference>
<name>IF2_GLUOX</name>
<feature type="chain" id="PRO_0000228202" description="Translation initiation factor IF-2">
    <location>
        <begin position="1"/>
        <end position="917"/>
    </location>
</feature>
<feature type="domain" description="tr-type G">
    <location>
        <begin position="416"/>
        <end position="586"/>
    </location>
</feature>
<feature type="region of interest" description="Disordered" evidence="3">
    <location>
        <begin position="1"/>
        <end position="84"/>
    </location>
</feature>
<feature type="region of interest" description="Disordered" evidence="3">
    <location>
        <begin position="150"/>
        <end position="318"/>
    </location>
</feature>
<feature type="region of interest" description="G1" evidence="1">
    <location>
        <begin position="425"/>
        <end position="432"/>
    </location>
</feature>
<feature type="region of interest" description="G2" evidence="1">
    <location>
        <begin position="450"/>
        <end position="454"/>
    </location>
</feature>
<feature type="region of interest" description="G3" evidence="1">
    <location>
        <begin position="472"/>
        <end position="475"/>
    </location>
</feature>
<feature type="region of interest" description="G4" evidence="1">
    <location>
        <begin position="526"/>
        <end position="529"/>
    </location>
</feature>
<feature type="region of interest" description="G5" evidence="1">
    <location>
        <begin position="562"/>
        <end position="564"/>
    </location>
</feature>
<feature type="compositionally biased region" description="Polar residues" evidence="3">
    <location>
        <begin position="10"/>
        <end position="27"/>
    </location>
</feature>
<feature type="compositionally biased region" description="Low complexity" evidence="3">
    <location>
        <begin position="69"/>
        <end position="84"/>
    </location>
</feature>
<feature type="compositionally biased region" description="Low complexity" evidence="3">
    <location>
        <begin position="154"/>
        <end position="177"/>
    </location>
</feature>
<feature type="compositionally biased region" description="Low complexity" evidence="3">
    <location>
        <begin position="227"/>
        <end position="236"/>
    </location>
</feature>
<feature type="compositionally biased region" description="Pro residues" evidence="3">
    <location>
        <begin position="265"/>
        <end position="274"/>
    </location>
</feature>
<feature type="compositionally biased region" description="Basic and acidic residues" evidence="3">
    <location>
        <begin position="282"/>
        <end position="305"/>
    </location>
</feature>
<feature type="binding site" evidence="2">
    <location>
        <begin position="425"/>
        <end position="432"/>
    </location>
    <ligand>
        <name>GTP</name>
        <dbReference type="ChEBI" id="CHEBI:37565"/>
    </ligand>
</feature>
<feature type="binding site" evidence="2">
    <location>
        <begin position="472"/>
        <end position="476"/>
    </location>
    <ligand>
        <name>GTP</name>
        <dbReference type="ChEBI" id="CHEBI:37565"/>
    </ligand>
</feature>
<feature type="binding site" evidence="2">
    <location>
        <begin position="526"/>
        <end position="529"/>
    </location>
    <ligand>
        <name>GTP</name>
        <dbReference type="ChEBI" id="CHEBI:37565"/>
    </ligand>
</feature>
<keyword id="KW-0963">Cytoplasm</keyword>
<keyword id="KW-0342">GTP-binding</keyword>
<keyword id="KW-0396">Initiation factor</keyword>
<keyword id="KW-0547">Nucleotide-binding</keyword>
<keyword id="KW-0648">Protein biosynthesis</keyword>
<keyword id="KW-1185">Reference proteome</keyword>